<dbReference type="EMBL" id="BC114713">
    <property type="protein sequence ID" value="AAI14714.1"/>
    <property type="molecule type" value="mRNA"/>
</dbReference>
<dbReference type="RefSeq" id="NP_001069502.1">
    <property type="nucleotide sequence ID" value="NM_001076034.1"/>
</dbReference>
<dbReference type="SMR" id="Q1RMU1"/>
<dbReference type="FunCoup" id="Q1RMU1">
    <property type="interactions" value="142"/>
</dbReference>
<dbReference type="STRING" id="9913.ENSBTAP00000010680"/>
<dbReference type="GlyCosmos" id="Q1RMU1">
    <property type="glycosylation" value="1 site, No reported glycans"/>
</dbReference>
<dbReference type="GlyGen" id="Q1RMU1">
    <property type="glycosylation" value="1 site"/>
</dbReference>
<dbReference type="PaxDb" id="9913-ENSBTAP00000010680"/>
<dbReference type="Ensembl" id="ENSBTAT00000010680.6">
    <property type="protein sequence ID" value="ENSBTAP00000010680.5"/>
    <property type="gene ID" value="ENSBTAG00000008121.6"/>
</dbReference>
<dbReference type="GeneID" id="534650"/>
<dbReference type="KEGG" id="bta:534650"/>
<dbReference type="CTD" id="84870"/>
<dbReference type="VEuPathDB" id="HostDB:ENSBTAG00000008121"/>
<dbReference type="VGNC" id="VGNC:106906">
    <property type="gene designation" value="RSPO3"/>
</dbReference>
<dbReference type="eggNOG" id="KOG3525">
    <property type="taxonomic scope" value="Eukaryota"/>
</dbReference>
<dbReference type="GeneTree" id="ENSGT00940000157815"/>
<dbReference type="InParanoid" id="Q1RMU1"/>
<dbReference type="OMA" id="CMTSCPL"/>
<dbReference type="OrthoDB" id="10257656at2759"/>
<dbReference type="Reactome" id="R-BTA-4641263">
    <property type="pathway name" value="Regulation of FZD by ubiquitination"/>
</dbReference>
<dbReference type="Proteomes" id="UP000009136">
    <property type="component" value="Chromosome 9"/>
</dbReference>
<dbReference type="Bgee" id="ENSBTAG00000008121">
    <property type="expression patterns" value="Expressed in gluteus medius and 90 other cell types or tissues"/>
</dbReference>
<dbReference type="GO" id="GO:0005615">
    <property type="term" value="C:extracellular space"/>
    <property type="evidence" value="ECO:0000318"/>
    <property type="project" value="GO_Central"/>
</dbReference>
<dbReference type="GO" id="GO:0005109">
    <property type="term" value="F:frizzled binding"/>
    <property type="evidence" value="ECO:0000318"/>
    <property type="project" value="GO_Central"/>
</dbReference>
<dbReference type="GO" id="GO:0008201">
    <property type="term" value="F:heparin binding"/>
    <property type="evidence" value="ECO:0007669"/>
    <property type="project" value="UniProtKB-KW"/>
</dbReference>
<dbReference type="GO" id="GO:0001974">
    <property type="term" value="P:blood vessel remodeling"/>
    <property type="evidence" value="ECO:0000250"/>
    <property type="project" value="UniProtKB"/>
</dbReference>
<dbReference type="GO" id="GO:0060670">
    <property type="term" value="P:branching involved in labyrinthine layer morphogenesis"/>
    <property type="evidence" value="ECO:0007669"/>
    <property type="project" value="Ensembl"/>
</dbReference>
<dbReference type="GO" id="GO:0060070">
    <property type="term" value="P:canonical Wnt signaling pathway"/>
    <property type="evidence" value="ECO:0007669"/>
    <property type="project" value="Ensembl"/>
</dbReference>
<dbReference type="GO" id="GO:0060173">
    <property type="term" value="P:limb development"/>
    <property type="evidence" value="ECO:0000250"/>
    <property type="project" value="UniProtKB"/>
</dbReference>
<dbReference type="GO" id="GO:0090263">
    <property type="term" value="P:positive regulation of canonical Wnt signaling pathway"/>
    <property type="evidence" value="ECO:0000318"/>
    <property type="project" value="GO_Central"/>
</dbReference>
<dbReference type="GO" id="GO:2000052">
    <property type="term" value="P:positive regulation of non-canonical Wnt signaling pathway"/>
    <property type="evidence" value="ECO:0000250"/>
    <property type="project" value="UniProtKB"/>
</dbReference>
<dbReference type="GO" id="GO:0030177">
    <property type="term" value="P:positive regulation of Wnt signaling pathway"/>
    <property type="evidence" value="ECO:0000250"/>
    <property type="project" value="UniProtKB"/>
</dbReference>
<dbReference type="GO" id="GO:0002040">
    <property type="term" value="P:sprouting angiogenesis"/>
    <property type="evidence" value="ECO:0000250"/>
    <property type="project" value="UniProtKB"/>
</dbReference>
<dbReference type="CDD" id="cd00064">
    <property type="entry name" value="FU"/>
    <property type="match status" value="1"/>
</dbReference>
<dbReference type="FunFam" id="2.10.220.10:FF:000003">
    <property type="entry name" value="R-spondin 3"/>
    <property type="match status" value="1"/>
</dbReference>
<dbReference type="FunFam" id="2.20.100.10:FF:000043">
    <property type="entry name" value="R-spondin 3"/>
    <property type="match status" value="1"/>
</dbReference>
<dbReference type="Gene3D" id="2.10.220.10">
    <property type="entry name" value="Hormone Receptor, Insulin-like Growth Factor Receptor 1, Chain A, domain 2"/>
    <property type="match status" value="1"/>
</dbReference>
<dbReference type="Gene3D" id="2.20.100.10">
    <property type="entry name" value="Thrombospondin type-1 (TSP1) repeat"/>
    <property type="match status" value="1"/>
</dbReference>
<dbReference type="InterPro" id="IPR006212">
    <property type="entry name" value="Furin_repeat"/>
</dbReference>
<dbReference type="InterPro" id="IPR009030">
    <property type="entry name" value="Growth_fac_rcpt_cys_sf"/>
</dbReference>
<dbReference type="InterPro" id="IPR051514">
    <property type="entry name" value="R-spondin"/>
</dbReference>
<dbReference type="InterPro" id="IPR043601">
    <property type="entry name" value="Rspo_Fu-CRD_dom"/>
</dbReference>
<dbReference type="InterPro" id="IPR000884">
    <property type="entry name" value="TSP1_rpt"/>
</dbReference>
<dbReference type="InterPro" id="IPR036383">
    <property type="entry name" value="TSP1_rpt_sf"/>
</dbReference>
<dbReference type="InterPro" id="IPR044004">
    <property type="entry name" value="TSP1_spondin_dom"/>
</dbReference>
<dbReference type="PANTHER" id="PTHR46987">
    <property type="entry name" value="NEUROHYPOPHYSIAL HORMONES, N-TERMINAL DOMAIN CONTAINING PROTEIN"/>
    <property type="match status" value="1"/>
</dbReference>
<dbReference type="PANTHER" id="PTHR46987:SF1">
    <property type="entry name" value="R-SPONDIN-3"/>
    <property type="match status" value="1"/>
</dbReference>
<dbReference type="Pfam" id="PF15913">
    <property type="entry name" value="Furin-like_2"/>
    <property type="match status" value="1"/>
</dbReference>
<dbReference type="Pfam" id="PF19028">
    <property type="entry name" value="TSP1_spondin"/>
    <property type="match status" value="1"/>
</dbReference>
<dbReference type="SMART" id="SM00261">
    <property type="entry name" value="FU"/>
    <property type="match status" value="2"/>
</dbReference>
<dbReference type="SMART" id="SM00209">
    <property type="entry name" value="TSP1"/>
    <property type="match status" value="1"/>
</dbReference>
<dbReference type="SUPFAM" id="SSF57184">
    <property type="entry name" value="Growth factor receptor domain"/>
    <property type="match status" value="1"/>
</dbReference>
<dbReference type="SUPFAM" id="SSF82895">
    <property type="entry name" value="TSP-1 type 1 repeat"/>
    <property type="match status" value="1"/>
</dbReference>
<dbReference type="PROSITE" id="PS50092">
    <property type="entry name" value="TSP1"/>
    <property type="match status" value="1"/>
</dbReference>
<comment type="function">
    <text evidence="1 2">Activator of the canonical Wnt signaling pathway by acting as a ligand for LGR4-6 receptors, which acts as a key regulator of angiogenesis. Upon binding to LGR4-6 (LGR4, LGR5 or LGR6), LGR4-6 associate with phosphorylated LRP6 and frizzled receptors that are activated by extracellular Wnt receptors, triggering the canonical Wnt signaling pathway to increase expression of target genes. Also regulates the canonical Wnt/beta-catenin-dependent pathway and non-canonical Wnt signaling by acting as an inhibitor of ZNRF3, an important regulator of the Wnt signaling pathway. Acts as a ligand for frizzled FZD8 and LRP6. May negatively regulate the TGF-beta pathway. Acts as a key regulator of angiogenesis by controlling vascular stability and pruning: acts by activating the non-canonical Wnt signaling pathway in endothelial cells (By similarity). Can also amplify Wnt signaling pathway independently of LGR4-6 receptors, possibly by acting as a direct antagonistic ligand to RNF43 and ZNRF3 (By similarity).</text>
</comment>
<comment type="subunit">
    <text evidence="1">Interacts with the extracellular domain of FZD8 and LRP6. It however does not form a ternary complex with FZD8 and LRP6. Interacts with WNT1. Binds heparin. Interacts with LGR4, LGR5 and LGR6.</text>
</comment>
<comment type="subcellular location">
    <subcellularLocation>
        <location evidence="1">Secreted</location>
    </subcellularLocation>
</comment>
<comment type="domain">
    <text evidence="1">The FU repeats are required for activation and stabilization of beta-catenin.</text>
</comment>
<comment type="similarity">
    <text evidence="6">Belongs to the R-spondin family.</text>
</comment>
<sequence length="273" mass="31057">MHLRLISWFFIILNFMEYIGSQNASRGRRQRRMHPNVSQGCQGGCATCSDYNGCLSCKPKLFFVLERIGMKQIGVCLSSCPSGYYGTRYPDINKCTKCKADCDTCFNKNFCTKCKSGFYLHLGKCLDNCPEGLEANNHTMECVSIVHCEASEWSPWSPCTKKGKTCGFKRGTETRVREIIQHPSAKGNLCPPTSEARKCTVQRKKCPKGERGRKGRERKRKKPNKEESKDAIPDNKGLEPSRETPEQRENKQQQKKRKVQDKQQKSVSVSTVH</sequence>
<reference key="1">
    <citation type="submission" date="2006-04" db="EMBL/GenBank/DDBJ databases">
        <authorList>
            <consortium name="NIH - Mammalian Gene Collection (MGC) project"/>
        </authorList>
    </citation>
    <scope>NUCLEOTIDE SEQUENCE [LARGE SCALE MRNA]</scope>
    <source>
        <strain>Hereford</strain>
        <tissue>Uterus</tissue>
    </source>
</reference>
<evidence type="ECO:0000250" key="1">
    <source>
        <dbReference type="UniProtKB" id="Q2TJ95"/>
    </source>
</evidence>
<evidence type="ECO:0000250" key="2">
    <source>
        <dbReference type="UniProtKB" id="Q9BXY4"/>
    </source>
</evidence>
<evidence type="ECO:0000255" key="3"/>
<evidence type="ECO:0000255" key="4">
    <source>
        <dbReference type="PROSITE-ProRule" id="PRU00210"/>
    </source>
</evidence>
<evidence type="ECO:0000256" key="5">
    <source>
        <dbReference type="SAM" id="MobiDB-lite"/>
    </source>
</evidence>
<evidence type="ECO:0000305" key="6"/>
<gene>
    <name type="primary">RSPO3</name>
</gene>
<protein>
    <recommendedName>
        <fullName>R-spondin-3</fullName>
    </recommendedName>
    <alternativeName>
        <fullName>Roof plate-specific spondin-3</fullName>
    </alternativeName>
</protein>
<accession>Q1RMU1</accession>
<feature type="signal peptide" evidence="3">
    <location>
        <begin position="1"/>
        <end position="21"/>
    </location>
</feature>
<feature type="chain" id="PRO_0000278645" description="R-spondin-3">
    <location>
        <begin position="22"/>
        <end position="273"/>
    </location>
</feature>
<feature type="repeat" description="FU 1">
    <location>
        <begin position="35"/>
        <end position="86"/>
    </location>
</feature>
<feature type="repeat" description="FU 2">
    <location>
        <begin position="92"/>
        <end position="135"/>
    </location>
</feature>
<feature type="domain" description="TSP type-1" evidence="4">
    <location>
        <begin position="147"/>
        <end position="207"/>
    </location>
</feature>
<feature type="region of interest" description="Disordered" evidence="5">
    <location>
        <begin position="201"/>
        <end position="273"/>
    </location>
</feature>
<feature type="compositionally biased region" description="Basic residues" evidence="5">
    <location>
        <begin position="213"/>
        <end position="223"/>
    </location>
</feature>
<feature type="compositionally biased region" description="Basic and acidic residues" evidence="5">
    <location>
        <begin position="224"/>
        <end position="252"/>
    </location>
</feature>
<feature type="glycosylation site" description="N-linked (GlcNAc...) asparagine" evidence="3">
    <location>
        <position position="36"/>
    </location>
</feature>
<feature type="disulfide bond" evidence="4">
    <location>
        <begin position="41"/>
        <end position="48"/>
    </location>
</feature>
<feature type="disulfide bond" evidence="4">
    <location>
        <begin position="45"/>
        <end position="54"/>
    </location>
</feature>
<feature type="disulfide bond" evidence="4">
    <location>
        <begin position="57"/>
        <end position="76"/>
    </location>
</feature>
<feature type="disulfide bond" evidence="4">
    <location>
        <begin position="80"/>
        <end position="95"/>
    </location>
</feature>
<feature type="disulfide bond" evidence="4">
    <location>
        <begin position="98"/>
        <end position="105"/>
    </location>
</feature>
<feature type="disulfide bond" evidence="4">
    <location>
        <begin position="102"/>
        <end position="111"/>
    </location>
</feature>
<feature type="disulfide bond" evidence="4">
    <location>
        <begin position="114"/>
        <end position="125"/>
    </location>
</feature>
<feature type="disulfide bond" evidence="4">
    <location>
        <begin position="129"/>
        <end position="142"/>
    </location>
</feature>
<feature type="disulfide bond" evidence="4">
    <location>
        <begin position="148"/>
        <end position="190"/>
    </location>
</feature>
<feature type="disulfide bond" evidence="4">
    <location>
        <begin position="159"/>
        <end position="166"/>
    </location>
</feature>
<feature type="disulfide bond" evidence="4">
    <location>
        <begin position="199"/>
        <end position="206"/>
    </location>
</feature>
<name>RSPO3_BOVIN</name>
<keyword id="KW-1015">Disulfide bond</keyword>
<keyword id="KW-0325">Glycoprotein</keyword>
<keyword id="KW-0358">Heparin-binding</keyword>
<keyword id="KW-1185">Reference proteome</keyword>
<keyword id="KW-0677">Repeat</keyword>
<keyword id="KW-0964">Secreted</keyword>
<keyword id="KW-0716">Sensory transduction</keyword>
<keyword id="KW-0732">Signal</keyword>
<keyword id="KW-0879">Wnt signaling pathway</keyword>
<proteinExistence type="evidence at transcript level"/>
<organism>
    <name type="scientific">Bos taurus</name>
    <name type="common">Bovine</name>
    <dbReference type="NCBI Taxonomy" id="9913"/>
    <lineage>
        <taxon>Eukaryota</taxon>
        <taxon>Metazoa</taxon>
        <taxon>Chordata</taxon>
        <taxon>Craniata</taxon>
        <taxon>Vertebrata</taxon>
        <taxon>Euteleostomi</taxon>
        <taxon>Mammalia</taxon>
        <taxon>Eutheria</taxon>
        <taxon>Laurasiatheria</taxon>
        <taxon>Artiodactyla</taxon>
        <taxon>Ruminantia</taxon>
        <taxon>Pecora</taxon>
        <taxon>Bovidae</taxon>
        <taxon>Bovinae</taxon>
        <taxon>Bos</taxon>
    </lineage>
</organism>